<accession>A4TQ57</accession>
<name>LUXS_YERPP</name>
<feature type="chain" id="PRO_0000298060" description="S-ribosylhomocysteine lyase">
    <location>
        <begin position="1"/>
        <end position="171"/>
    </location>
</feature>
<feature type="binding site" evidence="1">
    <location>
        <position position="54"/>
    </location>
    <ligand>
        <name>Fe cation</name>
        <dbReference type="ChEBI" id="CHEBI:24875"/>
    </ligand>
</feature>
<feature type="binding site" evidence="1">
    <location>
        <position position="58"/>
    </location>
    <ligand>
        <name>Fe cation</name>
        <dbReference type="ChEBI" id="CHEBI:24875"/>
    </ligand>
</feature>
<feature type="binding site" evidence="1">
    <location>
        <position position="128"/>
    </location>
    <ligand>
        <name>Fe cation</name>
        <dbReference type="ChEBI" id="CHEBI:24875"/>
    </ligand>
</feature>
<protein>
    <recommendedName>
        <fullName evidence="1">S-ribosylhomocysteine lyase</fullName>
        <ecNumber evidence="1">4.4.1.21</ecNumber>
    </recommendedName>
    <alternativeName>
        <fullName evidence="1">AI-2 synthesis protein</fullName>
    </alternativeName>
    <alternativeName>
        <fullName evidence="1">Autoinducer-2 production protein LuxS</fullName>
    </alternativeName>
</protein>
<keyword id="KW-0071">Autoinducer synthesis</keyword>
<keyword id="KW-0408">Iron</keyword>
<keyword id="KW-0456">Lyase</keyword>
<keyword id="KW-0479">Metal-binding</keyword>
<keyword id="KW-0673">Quorum sensing</keyword>
<sequence>MPLLDSFTVDHTIMKAPAVRVAKTMKTPHGDEITVFDLRFCVPNKEVMPEKGIHTLEHLFAGFMRDHLNGDGVEIIDISPMGCRTGFYMSLIGTPDEQRVADAWKAAMADVLKVTDQRKIPELNEYQCGTYHMHSLEEAQSIAKDILDRDVRINHNEELALPKEKLTELHI</sequence>
<organism>
    <name type="scientific">Yersinia pestis (strain Pestoides F)</name>
    <dbReference type="NCBI Taxonomy" id="386656"/>
    <lineage>
        <taxon>Bacteria</taxon>
        <taxon>Pseudomonadati</taxon>
        <taxon>Pseudomonadota</taxon>
        <taxon>Gammaproteobacteria</taxon>
        <taxon>Enterobacterales</taxon>
        <taxon>Yersiniaceae</taxon>
        <taxon>Yersinia</taxon>
    </lineage>
</organism>
<proteinExistence type="inferred from homology"/>
<comment type="function">
    <text evidence="1">Involved in the synthesis of autoinducer 2 (AI-2) which is secreted by bacteria and is used to communicate both the cell density and the metabolic potential of the environment. The regulation of gene expression in response to changes in cell density is called quorum sensing. Catalyzes the transformation of S-ribosylhomocysteine (RHC) to homocysteine (HC) and 4,5-dihydroxy-2,3-pentadione (DPD).</text>
</comment>
<comment type="catalytic activity">
    <reaction evidence="1">
        <text>S-(5-deoxy-D-ribos-5-yl)-L-homocysteine = (S)-4,5-dihydroxypentane-2,3-dione + L-homocysteine</text>
        <dbReference type="Rhea" id="RHEA:17753"/>
        <dbReference type="ChEBI" id="CHEBI:29484"/>
        <dbReference type="ChEBI" id="CHEBI:58195"/>
        <dbReference type="ChEBI" id="CHEBI:58199"/>
        <dbReference type="EC" id="4.4.1.21"/>
    </reaction>
</comment>
<comment type="cofactor">
    <cofactor evidence="1">
        <name>Fe cation</name>
        <dbReference type="ChEBI" id="CHEBI:24875"/>
    </cofactor>
    <text evidence="1">Binds 1 Fe cation per subunit.</text>
</comment>
<comment type="subunit">
    <text evidence="1">Homodimer.</text>
</comment>
<comment type="similarity">
    <text evidence="1">Belongs to the LuxS family.</text>
</comment>
<dbReference type="EC" id="4.4.1.21" evidence="1"/>
<dbReference type="EMBL" id="CP000668">
    <property type="protein sequence ID" value="ABP41419.1"/>
    <property type="molecule type" value="Genomic_DNA"/>
</dbReference>
<dbReference type="RefSeq" id="WP_002209453.1">
    <property type="nucleotide sequence ID" value="NZ_CP009715.1"/>
</dbReference>
<dbReference type="SMR" id="A4TQ57"/>
<dbReference type="GeneID" id="57975413"/>
<dbReference type="KEGG" id="ypp:YPDSF_3061"/>
<dbReference type="PATRIC" id="fig|386656.14.peg.1299"/>
<dbReference type="GO" id="GO:0005506">
    <property type="term" value="F:iron ion binding"/>
    <property type="evidence" value="ECO:0007669"/>
    <property type="project" value="InterPro"/>
</dbReference>
<dbReference type="GO" id="GO:0043768">
    <property type="term" value="F:S-ribosylhomocysteine lyase activity"/>
    <property type="evidence" value="ECO:0007669"/>
    <property type="project" value="UniProtKB-UniRule"/>
</dbReference>
<dbReference type="GO" id="GO:0009372">
    <property type="term" value="P:quorum sensing"/>
    <property type="evidence" value="ECO:0007669"/>
    <property type="project" value="UniProtKB-UniRule"/>
</dbReference>
<dbReference type="FunFam" id="3.30.1360.80:FF:000001">
    <property type="entry name" value="S-ribosylhomocysteine lyase"/>
    <property type="match status" value="1"/>
</dbReference>
<dbReference type="Gene3D" id="3.30.1360.80">
    <property type="entry name" value="S-ribosylhomocysteinase (LuxS)"/>
    <property type="match status" value="1"/>
</dbReference>
<dbReference type="HAMAP" id="MF_00091">
    <property type="entry name" value="LuxS"/>
    <property type="match status" value="1"/>
</dbReference>
<dbReference type="InterPro" id="IPR037005">
    <property type="entry name" value="LuxS_sf"/>
</dbReference>
<dbReference type="InterPro" id="IPR011249">
    <property type="entry name" value="Metalloenz_LuxS/M16"/>
</dbReference>
<dbReference type="InterPro" id="IPR003815">
    <property type="entry name" value="S-ribosylhomocysteinase"/>
</dbReference>
<dbReference type="NCBIfam" id="NF002602">
    <property type="entry name" value="PRK02260.1-2"/>
    <property type="match status" value="1"/>
</dbReference>
<dbReference type="PANTHER" id="PTHR35799">
    <property type="entry name" value="S-RIBOSYLHOMOCYSTEINE LYASE"/>
    <property type="match status" value="1"/>
</dbReference>
<dbReference type="PANTHER" id="PTHR35799:SF1">
    <property type="entry name" value="S-RIBOSYLHOMOCYSTEINE LYASE"/>
    <property type="match status" value="1"/>
</dbReference>
<dbReference type="Pfam" id="PF02664">
    <property type="entry name" value="LuxS"/>
    <property type="match status" value="1"/>
</dbReference>
<dbReference type="PIRSF" id="PIRSF006160">
    <property type="entry name" value="AI2"/>
    <property type="match status" value="1"/>
</dbReference>
<dbReference type="PRINTS" id="PR01487">
    <property type="entry name" value="LUXSPROTEIN"/>
</dbReference>
<dbReference type="SUPFAM" id="SSF63411">
    <property type="entry name" value="LuxS/MPP-like metallohydrolase"/>
    <property type="match status" value="1"/>
</dbReference>
<reference key="1">
    <citation type="submission" date="2007-02" db="EMBL/GenBank/DDBJ databases">
        <title>Complete sequence of chromosome of Yersinia pestis Pestoides F.</title>
        <authorList>
            <consortium name="US DOE Joint Genome Institute"/>
            <person name="Copeland A."/>
            <person name="Lucas S."/>
            <person name="Lapidus A."/>
            <person name="Barry K."/>
            <person name="Detter J.C."/>
            <person name="Glavina del Rio T."/>
            <person name="Hammon N."/>
            <person name="Israni S."/>
            <person name="Dalin E."/>
            <person name="Tice H."/>
            <person name="Pitluck S."/>
            <person name="Di Bartolo G."/>
            <person name="Chain P."/>
            <person name="Malfatti S."/>
            <person name="Shin M."/>
            <person name="Vergez L."/>
            <person name="Schmutz J."/>
            <person name="Larimer F."/>
            <person name="Land M."/>
            <person name="Hauser L."/>
            <person name="Worsham P."/>
            <person name="Chu M."/>
            <person name="Bearden S."/>
            <person name="Garcia E."/>
            <person name="Richardson P."/>
        </authorList>
    </citation>
    <scope>NUCLEOTIDE SEQUENCE [LARGE SCALE GENOMIC DNA]</scope>
    <source>
        <strain>Pestoides F</strain>
    </source>
</reference>
<evidence type="ECO:0000255" key="1">
    <source>
        <dbReference type="HAMAP-Rule" id="MF_00091"/>
    </source>
</evidence>
<gene>
    <name evidence="1" type="primary">luxS</name>
    <name type="ordered locus">YPDSF_3061</name>
</gene>